<dbReference type="EMBL" id="M95287">
    <property type="status" value="NOT_ANNOTATED_CDS"/>
    <property type="molecule type" value="Genomic_DNA"/>
</dbReference>
<dbReference type="EMBL" id="M33633">
    <property type="protein sequence ID" value="AAA88678.1"/>
    <property type="molecule type" value="Genomic_DNA"/>
</dbReference>
<dbReference type="PIR" id="B26839">
    <property type="entry name" value="B26839"/>
</dbReference>
<organism>
    <name type="scientific">Escherichia coli</name>
    <dbReference type="NCBI Taxonomy" id="562"/>
    <lineage>
        <taxon>Bacteria</taxon>
        <taxon>Pseudomonadati</taxon>
        <taxon>Pseudomonadota</taxon>
        <taxon>Gammaproteobacteria</taxon>
        <taxon>Enterobacterales</taxon>
        <taxon>Enterobacteriaceae</taxon>
        <taxon>Escherichia</taxon>
    </lineage>
</organism>
<proteinExistence type="predicted"/>
<protein>
    <recommendedName>
        <fullName>Uncharacterized 14.7 kDa protein</fullName>
    </recommendedName>
    <alternativeName>
        <fullName>ORF 2</fullName>
    </alternativeName>
</protein>
<feature type="chain" id="PRO_0000068530" description="Uncharacterized 14.7 kDa protein">
    <location>
        <begin position="1"/>
        <end position="131"/>
    </location>
</feature>
<reference key="1">
    <citation type="journal article" date="1987" name="Nucleic Acids Res.">
        <title>The region of the IncN plasmid R46 coding for resistance to beta-lactam antibiotics, streptomycin/spectinomycin and sulphonamides is closely related to antibiotic resistance segments found in IncW plasmids and in Tn21-like transposons.</title>
        <authorList>
            <person name="Hall R.M."/>
            <person name="Vockler C."/>
        </authorList>
    </citation>
    <scope>NUCLEOTIDE SEQUENCE [GENOMIC DNA]</scope>
</reference>
<reference key="2">
    <citation type="journal article" date="1990" name="J. Bacteriol.">
        <title>Structural and functional characterization of tnpI, a recombinase locus in Tn21 and related beta-lactamase transposons.</title>
        <authorList>
            <person name="Mercier J."/>
            <person name="Lachapelle J."/>
            <person name="Couture F."/>
            <person name="Lafond M."/>
            <person name="Vezina G."/>
            <person name="Boissinot M."/>
            <person name="Levesque R.C."/>
        </authorList>
    </citation>
    <scope>NUCLEOTIDE SEQUENCE [GENOMIC DNA]</scope>
    <source>
        <transposon>Tn21</transposon>
    </source>
</reference>
<accession>P10018</accession>
<keyword id="KW-0614">Plasmid</keyword>
<keyword id="KW-0814">Transposable element</keyword>
<geneLocation type="plasmid">
    <name>IncN R46</name>
</geneLocation>
<name>YPR2_ECOLX</name>
<sequence length="131" mass="14745">MIEIQILDPQLQTLTDPHARSIQKLGEQTMLAFQKTEDANHFIRGQHHRQAPRRPRSSDLLKPGQIRAQHLAVEEQQGRQCLTMRGDRNLALVRQPGQKCLDFAAAQGCRVTHTVETDEGTNPVDISLFGS</sequence>